<organism>
    <name type="scientific">Thermoplasma acidophilum (strain ATCC 25905 / DSM 1728 / JCM 9062 / NBRC 15155 / AMRC-C165)</name>
    <dbReference type="NCBI Taxonomy" id="273075"/>
    <lineage>
        <taxon>Archaea</taxon>
        <taxon>Methanobacteriati</taxon>
        <taxon>Thermoplasmatota</taxon>
        <taxon>Thermoplasmata</taxon>
        <taxon>Thermoplasmatales</taxon>
        <taxon>Thermoplasmataceae</taxon>
        <taxon>Thermoplasma</taxon>
    </lineage>
</organism>
<comment type="function">
    <text evidence="1">Catalyzes the isomerization of sedoheptulose 7-phosphate in D-glycero-D-manno-heptose 7-phosphate.</text>
</comment>
<comment type="catalytic activity">
    <reaction evidence="1">
        <text>2 D-sedoheptulose 7-phosphate = D-glycero-alpha-D-manno-heptose 7-phosphate + D-glycero-beta-D-manno-heptose 7-phosphate</text>
        <dbReference type="Rhea" id="RHEA:27489"/>
        <dbReference type="ChEBI" id="CHEBI:57483"/>
        <dbReference type="ChEBI" id="CHEBI:60203"/>
        <dbReference type="ChEBI" id="CHEBI:60204"/>
        <dbReference type="EC" id="5.3.1.28"/>
    </reaction>
</comment>
<comment type="cofactor">
    <cofactor evidence="1">
        <name>Zn(2+)</name>
        <dbReference type="ChEBI" id="CHEBI:29105"/>
    </cofactor>
    <text evidence="1">Binds 1 zinc ion per subunit.</text>
</comment>
<comment type="pathway">
    <text evidence="1">Carbohydrate biosynthesis; D-glycero-D-manno-heptose 7-phosphate biosynthesis; D-glycero-alpha-D-manno-heptose 7-phosphate and D-glycero-beta-D-manno-heptose 7-phosphate from sedoheptulose 7-phosphate: step 1/1.</text>
</comment>
<comment type="subcellular location">
    <subcellularLocation>
        <location evidence="1">Cytoplasm</location>
    </subcellularLocation>
</comment>
<comment type="miscellaneous">
    <text evidence="1">The reaction produces a racemic mixture of D-glycero-alpha-D-manno-heptose 7-phosphate and D-glycero-beta-D-manno-heptose 7-phosphate.</text>
</comment>
<comment type="similarity">
    <text evidence="1">Belongs to the SIS family. GmhA subfamily.</text>
</comment>
<protein>
    <recommendedName>
        <fullName evidence="1">Probable phosphoheptose isomerase</fullName>
        <ecNumber evidence="1">5.3.1.28</ecNumber>
    </recommendedName>
    <alternativeName>
        <fullName evidence="1">Sedoheptulose 7-phosphate isomerase</fullName>
    </alternativeName>
</protein>
<sequence>MDAKKYLEEGARARLNLNIEKIIGIADKISSAISSGNKLIVFGNGGSAADAQHFVAELTGHFMKERKPLAAIALTTNTSSITAIANDYSYDVVFSRQVEALAKPGDVVVGISTSGNSKNVIEGIKSAKRIGCHTIAFTGRSGGQLKGVADETLNVDSDLTSIIQEMHITVIHMICAMIDEKF</sequence>
<accession>Q9HJV9</accession>
<evidence type="ECO:0000255" key="1">
    <source>
        <dbReference type="HAMAP-Rule" id="MF_00067"/>
    </source>
</evidence>
<feature type="chain" id="PRO_0000136553" description="Probable phosphoheptose isomerase">
    <location>
        <begin position="1"/>
        <end position="182"/>
    </location>
</feature>
<feature type="domain" description="SIS" evidence="1">
    <location>
        <begin position="29"/>
        <end position="182"/>
    </location>
</feature>
<feature type="binding site" evidence="1">
    <location>
        <begin position="44"/>
        <end position="46"/>
    </location>
    <ligand>
        <name>substrate</name>
    </ligand>
</feature>
<feature type="binding site" evidence="1">
    <location>
        <position position="53"/>
    </location>
    <ligand>
        <name>Zn(2+)</name>
        <dbReference type="ChEBI" id="CHEBI:29105"/>
    </ligand>
</feature>
<feature type="binding site" evidence="1">
    <location>
        <position position="57"/>
    </location>
    <ligand>
        <name>substrate</name>
    </ligand>
</feature>
<feature type="binding site" evidence="1">
    <location>
        <position position="57"/>
    </location>
    <ligand>
        <name>Zn(2+)</name>
        <dbReference type="ChEBI" id="CHEBI:29105"/>
    </ligand>
</feature>
<feature type="binding site" evidence="1">
    <location>
        <begin position="86"/>
        <end position="87"/>
    </location>
    <ligand>
        <name>substrate</name>
    </ligand>
</feature>
<feature type="binding site" evidence="1">
    <location>
        <begin position="112"/>
        <end position="114"/>
    </location>
    <ligand>
        <name>substrate</name>
    </ligand>
</feature>
<feature type="binding site" evidence="1">
    <location>
        <position position="117"/>
    </location>
    <ligand>
        <name>substrate</name>
    </ligand>
</feature>
<feature type="binding site" evidence="1">
    <location>
        <position position="164"/>
    </location>
    <ligand>
        <name>substrate</name>
    </ligand>
</feature>
<feature type="binding site" evidence="1">
    <location>
        <position position="164"/>
    </location>
    <ligand>
        <name>Zn(2+)</name>
        <dbReference type="ChEBI" id="CHEBI:29105"/>
    </ligand>
</feature>
<feature type="binding site" evidence="1">
    <location>
        <position position="172"/>
    </location>
    <ligand>
        <name>Zn(2+)</name>
        <dbReference type="ChEBI" id="CHEBI:29105"/>
    </ligand>
</feature>
<reference key="1">
    <citation type="journal article" date="2000" name="Nature">
        <title>The genome sequence of the thermoacidophilic scavenger Thermoplasma acidophilum.</title>
        <authorList>
            <person name="Ruepp A."/>
            <person name="Graml W."/>
            <person name="Santos-Martinez M.-L."/>
            <person name="Koretke K.K."/>
            <person name="Volker C."/>
            <person name="Mewes H.-W."/>
            <person name="Frishman D."/>
            <person name="Stocker S."/>
            <person name="Lupas A.N."/>
            <person name="Baumeister W."/>
        </authorList>
    </citation>
    <scope>NUCLEOTIDE SEQUENCE [LARGE SCALE GENOMIC DNA]</scope>
    <source>
        <strain>ATCC 25905 / DSM 1728 / JCM 9062 / NBRC 15155 / AMRC-C165</strain>
    </source>
</reference>
<gene>
    <name evidence="1" type="primary">gmhA</name>
    <name type="ordered locus">Ta0854</name>
</gene>
<dbReference type="EC" id="5.3.1.28" evidence="1"/>
<dbReference type="EMBL" id="AL445065">
    <property type="protein sequence ID" value="CAC11983.1"/>
    <property type="molecule type" value="Genomic_DNA"/>
</dbReference>
<dbReference type="RefSeq" id="WP_010901264.1">
    <property type="nucleotide sequence ID" value="NC_002578.1"/>
</dbReference>
<dbReference type="SMR" id="Q9HJV9"/>
<dbReference type="STRING" id="273075.gene:9572068"/>
<dbReference type="PaxDb" id="273075-Ta0854"/>
<dbReference type="EnsemblBacteria" id="CAC11983">
    <property type="protein sequence ID" value="CAC11983"/>
    <property type="gene ID" value="CAC11983"/>
</dbReference>
<dbReference type="KEGG" id="tac:Ta0854"/>
<dbReference type="eggNOG" id="arCOG05355">
    <property type="taxonomic scope" value="Archaea"/>
</dbReference>
<dbReference type="HOGENOM" id="CLU_080999_4_0_2"/>
<dbReference type="InParanoid" id="Q9HJV9"/>
<dbReference type="OrthoDB" id="64625at2157"/>
<dbReference type="UniPathway" id="UPA00041">
    <property type="reaction ID" value="UER00436"/>
</dbReference>
<dbReference type="Proteomes" id="UP000001024">
    <property type="component" value="Chromosome"/>
</dbReference>
<dbReference type="GO" id="GO:0005737">
    <property type="term" value="C:cytoplasm"/>
    <property type="evidence" value="ECO:0007669"/>
    <property type="project" value="UniProtKB-SubCell"/>
</dbReference>
<dbReference type="GO" id="GO:0097367">
    <property type="term" value="F:carbohydrate derivative binding"/>
    <property type="evidence" value="ECO:0007669"/>
    <property type="project" value="InterPro"/>
</dbReference>
<dbReference type="GO" id="GO:0008968">
    <property type="term" value="F:D-sedoheptulose 7-phosphate isomerase activity"/>
    <property type="evidence" value="ECO:0007669"/>
    <property type="project" value="UniProtKB-UniRule"/>
</dbReference>
<dbReference type="GO" id="GO:0008270">
    <property type="term" value="F:zinc ion binding"/>
    <property type="evidence" value="ECO:0007669"/>
    <property type="project" value="UniProtKB-UniRule"/>
</dbReference>
<dbReference type="GO" id="GO:0005975">
    <property type="term" value="P:carbohydrate metabolic process"/>
    <property type="evidence" value="ECO:0007669"/>
    <property type="project" value="UniProtKB-UniRule"/>
</dbReference>
<dbReference type="GO" id="GO:2001061">
    <property type="term" value="P:D-glycero-D-manno-heptose 7-phosphate biosynthetic process"/>
    <property type="evidence" value="ECO:0007669"/>
    <property type="project" value="UniProtKB-UniPathway"/>
</dbReference>
<dbReference type="CDD" id="cd05006">
    <property type="entry name" value="SIS_GmhA"/>
    <property type="match status" value="1"/>
</dbReference>
<dbReference type="Gene3D" id="3.40.50.10490">
    <property type="entry name" value="Glucose-6-phosphate isomerase like protein, domain 1"/>
    <property type="match status" value="1"/>
</dbReference>
<dbReference type="HAMAP" id="MF_00067">
    <property type="entry name" value="GmhA"/>
    <property type="match status" value="1"/>
</dbReference>
<dbReference type="InterPro" id="IPR035461">
    <property type="entry name" value="GmhA/DiaA"/>
</dbReference>
<dbReference type="InterPro" id="IPR004515">
    <property type="entry name" value="Phosphoheptose_Isoase"/>
</dbReference>
<dbReference type="InterPro" id="IPR001347">
    <property type="entry name" value="SIS_dom"/>
</dbReference>
<dbReference type="InterPro" id="IPR046348">
    <property type="entry name" value="SIS_dom_sf"/>
</dbReference>
<dbReference type="InterPro" id="IPR050099">
    <property type="entry name" value="SIS_GmhA/DiaA_subfam"/>
</dbReference>
<dbReference type="PANTHER" id="PTHR30390:SF6">
    <property type="entry name" value="DNAA INITIATOR-ASSOCIATING PROTEIN DIAA"/>
    <property type="match status" value="1"/>
</dbReference>
<dbReference type="PANTHER" id="PTHR30390">
    <property type="entry name" value="SEDOHEPTULOSE 7-PHOSPHATE ISOMERASE / DNAA INITIATOR-ASSOCIATING FACTOR FOR REPLICATION INITIATION"/>
    <property type="match status" value="1"/>
</dbReference>
<dbReference type="Pfam" id="PF13580">
    <property type="entry name" value="SIS_2"/>
    <property type="match status" value="1"/>
</dbReference>
<dbReference type="SUPFAM" id="SSF53697">
    <property type="entry name" value="SIS domain"/>
    <property type="match status" value="1"/>
</dbReference>
<dbReference type="PROSITE" id="PS51464">
    <property type="entry name" value="SIS"/>
    <property type="match status" value="1"/>
</dbReference>
<proteinExistence type="inferred from homology"/>
<name>GMHA_THEAC</name>
<keyword id="KW-0119">Carbohydrate metabolism</keyword>
<keyword id="KW-0963">Cytoplasm</keyword>
<keyword id="KW-0413">Isomerase</keyword>
<keyword id="KW-0479">Metal-binding</keyword>
<keyword id="KW-1185">Reference proteome</keyword>
<keyword id="KW-0862">Zinc</keyword>